<sequence>MSVANSRTAVYPGTFDPITNGHIDLVNRAAPLFERVVVGVAYSPSKGPALSLERRVALAQEALAAHANVEVRGFDTLLAHFVREMGAGVLLRGLRAVSDFEYEFQMASMNRHLIPEVETLFLTPAEQYSFISSSLVREIARLGGDVSGFVPASVVEALRQVRQSRAQA</sequence>
<gene>
    <name evidence="1" type="primary">coaD</name>
    <name type="synonym">kdtB</name>
    <name type="ordered locus">XAC2526</name>
</gene>
<protein>
    <recommendedName>
        <fullName evidence="1">Phosphopantetheine adenylyltransferase</fullName>
        <ecNumber evidence="1">2.7.7.3</ecNumber>
    </recommendedName>
    <alternativeName>
        <fullName evidence="1">Dephospho-CoA pyrophosphorylase</fullName>
    </alternativeName>
    <alternativeName>
        <fullName evidence="1">Pantetheine-phosphate adenylyltransferase</fullName>
        <shortName evidence="1">PPAT</shortName>
    </alternativeName>
</protein>
<proteinExistence type="inferred from homology"/>
<organism>
    <name type="scientific">Xanthomonas axonopodis pv. citri (strain 306)</name>
    <dbReference type="NCBI Taxonomy" id="190486"/>
    <lineage>
        <taxon>Bacteria</taxon>
        <taxon>Pseudomonadati</taxon>
        <taxon>Pseudomonadota</taxon>
        <taxon>Gammaproteobacteria</taxon>
        <taxon>Lysobacterales</taxon>
        <taxon>Lysobacteraceae</taxon>
        <taxon>Xanthomonas</taxon>
    </lineage>
</organism>
<feature type="chain" id="PRO_0000156311" description="Phosphopantetheine adenylyltransferase">
    <location>
        <begin position="1"/>
        <end position="168"/>
    </location>
</feature>
<feature type="binding site" evidence="1">
    <location>
        <begin position="14"/>
        <end position="15"/>
    </location>
    <ligand>
        <name>ATP</name>
        <dbReference type="ChEBI" id="CHEBI:30616"/>
    </ligand>
</feature>
<feature type="binding site" evidence="1">
    <location>
        <position position="14"/>
    </location>
    <ligand>
        <name>substrate</name>
    </ligand>
</feature>
<feature type="binding site" evidence="1">
    <location>
        <position position="22"/>
    </location>
    <ligand>
        <name>ATP</name>
        <dbReference type="ChEBI" id="CHEBI:30616"/>
    </ligand>
</feature>
<feature type="binding site" evidence="1">
    <location>
        <position position="46"/>
    </location>
    <ligand>
        <name>substrate</name>
    </ligand>
</feature>
<feature type="binding site" evidence="1">
    <location>
        <position position="78"/>
    </location>
    <ligand>
        <name>substrate</name>
    </ligand>
</feature>
<feature type="binding site" evidence="1">
    <location>
        <position position="92"/>
    </location>
    <ligand>
        <name>substrate</name>
    </ligand>
</feature>
<feature type="binding site" evidence="1">
    <location>
        <begin position="93"/>
        <end position="95"/>
    </location>
    <ligand>
        <name>ATP</name>
        <dbReference type="ChEBI" id="CHEBI:30616"/>
    </ligand>
</feature>
<feature type="binding site" evidence="1">
    <location>
        <position position="103"/>
    </location>
    <ligand>
        <name>ATP</name>
        <dbReference type="ChEBI" id="CHEBI:30616"/>
    </ligand>
</feature>
<feature type="binding site" evidence="1">
    <location>
        <begin position="128"/>
        <end position="134"/>
    </location>
    <ligand>
        <name>ATP</name>
        <dbReference type="ChEBI" id="CHEBI:30616"/>
    </ligand>
</feature>
<feature type="site" description="Transition state stabilizer" evidence="1">
    <location>
        <position position="22"/>
    </location>
</feature>
<name>COAD_XANAC</name>
<comment type="function">
    <text evidence="1">Reversibly transfers an adenylyl group from ATP to 4'-phosphopantetheine, yielding dephospho-CoA (dPCoA) and pyrophosphate.</text>
</comment>
<comment type="catalytic activity">
    <reaction evidence="1">
        <text>(R)-4'-phosphopantetheine + ATP + H(+) = 3'-dephospho-CoA + diphosphate</text>
        <dbReference type="Rhea" id="RHEA:19801"/>
        <dbReference type="ChEBI" id="CHEBI:15378"/>
        <dbReference type="ChEBI" id="CHEBI:30616"/>
        <dbReference type="ChEBI" id="CHEBI:33019"/>
        <dbReference type="ChEBI" id="CHEBI:57328"/>
        <dbReference type="ChEBI" id="CHEBI:61723"/>
        <dbReference type="EC" id="2.7.7.3"/>
    </reaction>
</comment>
<comment type="cofactor">
    <cofactor evidence="1">
        <name>Mg(2+)</name>
        <dbReference type="ChEBI" id="CHEBI:18420"/>
    </cofactor>
</comment>
<comment type="pathway">
    <text evidence="1">Cofactor biosynthesis; coenzyme A biosynthesis; CoA from (R)-pantothenate: step 4/5.</text>
</comment>
<comment type="subunit">
    <text evidence="1">Homohexamer.</text>
</comment>
<comment type="subcellular location">
    <subcellularLocation>
        <location evidence="1">Cytoplasm</location>
    </subcellularLocation>
</comment>
<comment type="similarity">
    <text evidence="1">Belongs to the bacterial CoaD family.</text>
</comment>
<reference key="1">
    <citation type="journal article" date="2002" name="Nature">
        <title>Comparison of the genomes of two Xanthomonas pathogens with differing host specificities.</title>
        <authorList>
            <person name="da Silva A.C.R."/>
            <person name="Ferro J.A."/>
            <person name="Reinach F.C."/>
            <person name="Farah C.S."/>
            <person name="Furlan L.R."/>
            <person name="Quaggio R.B."/>
            <person name="Monteiro-Vitorello C.B."/>
            <person name="Van Sluys M.A."/>
            <person name="Almeida N.F. Jr."/>
            <person name="Alves L.M.C."/>
            <person name="do Amaral A.M."/>
            <person name="Bertolini M.C."/>
            <person name="Camargo L.E.A."/>
            <person name="Camarotte G."/>
            <person name="Cannavan F."/>
            <person name="Cardozo J."/>
            <person name="Chambergo F."/>
            <person name="Ciapina L.P."/>
            <person name="Cicarelli R.M.B."/>
            <person name="Coutinho L.L."/>
            <person name="Cursino-Santos J.R."/>
            <person name="El-Dorry H."/>
            <person name="Faria J.B."/>
            <person name="Ferreira A.J.S."/>
            <person name="Ferreira R.C.C."/>
            <person name="Ferro M.I.T."/>
            <person name="Formighieri E.F."/>
            <person name="Franco M.C."/>
            <person name="Greggio C.C."/>
            <person name="Gruber A."/>
            <person name="Katsuyama A.M."/>
            <person name="Kishi L.T."/>
            <person name="Leite R.P."/>
            <person name="Lemos E.G.M."/>
            <person name="Lemos M.V.F."/>
            <person name="Locali E.C."/>
            <person name="Machado M.A."/>
            <person name="Madeira A.M.B.N."/>
            <person name="Martinez-Rossi N.M."/>
            <person name="Martins E.C."/>
            <person name="Meidanis J."/>
            <person name="Menck C.F.M."/>
            <person name="Miyaki C.Y."/>
            <person name="Moon D.H."/>
            <person name="Moreira L.M."/>
            <person name="Novo M.T.M."/>
            <person name="Okura V.K."/>
            <person name="Oliveira M.C."/>
            <person name="Oliveira V.R."/>
            <person name="Pereira H.A."/>
            <person name="Rossi A."/>
            <person name="Sena J.A.D."/>
            <person name="Silva C."/>
            <person name="de Souza R.F."/>
            <person name="Spinola L.A.F."/>
            <person name="Takita M.A."/>
            <person name="Tamura R.E."/>
            <person name="Teixeira E.C."/>
            <person name="Tezza R.I.D."/>
            <person name="Trindade dos Santos M."/>
            <person name="Truffi D."/>
            <person name="Tsai S.M."/>
            <person name="White F.F."/>
            <person name="Setubal J.C."/>
            <person name="Kitajima J.P."/>
        </authorList>
    </citation>
    <scope>NUCLEOTIDE SEQUENCE [LARGE SCALE GENOMIC DNA]</scope>
    <source>
        <strain>306</strain>
    </source>
</reference>
<evidence type="ECO:0000255" key="1">
    <source>
        <dbReference type="HAMAP-Rule" id="MF_00151"/>
    </source>
</evidence>
<keyword id="KW-0067">ATP-binding</keyword>
<keyword id="KW-0173">Coenzyme A biosynthesis</keyword>
<keyword id="KW-0963">Cytoplasm</keyword>
<keyword id="KW-0460">Magnesium</keyword>
<keyword id="KW-0547">Nucleotide-binding</keyword>
<keyword id="KW-0548">Nucleotidyltransferase</keyword>
<keyword id="KW-0808">Transferase</keyword>
<accession>Q8PJK5</accession>
<dbReference type="EC" id="2.7.7.3" evidence="1"/>
<dbReference type="EMBL" id="AE008923">
    <property type="protein sequence ID" value="AAM37377.1"/>
    <property type="molecule type" value="Genomic_DNA"/>
</dbReference>
<dbReference type="RefSeq" id="WP_005917071.1">
    <property type="nucleotide sequence ID" value="NC_003919.1"/>
</dbReference>
<dbReference type="SMR" id="Q8PJK5"/>
<dbReference type="GeneID" id="66911633"/>
<dbReference type="KEGG" id="xac:XAC2526"/>
<dbReference type="eggNOG" id="COG0669">
    <property type="taxonomic scope" value="Bacteria"/>
</dbReference>
<dbReference type="HOGENOM" id="CLU_100149_0_1_6"/>
<dbReference type="UniPathway" id="UPA00241">
    <property type="reaction ID" value="UER00355"/>
</dbReference>
<dbReference type="Proteomes" id="UP000000576">
    <property type="component" value="Chromosome"/>
</dbReference>
<dbReference type="GO" id="GO:0005737">
    <property type="term" value="C:cytoplasm"/>
    <property type="evidence" value="ECO:0007669"/>
    <property type="project" value="UniProtKB-SubCell"/>
</dbReference>
<dbReference type="GO" id="GO:0005524">
    <property type="term" value="F:ATP binding"/>
    <property type="evidence" value="ECO:0007669"/>
    <property type="project" value="UniProtKB-KW"/>
</dbReference>
<dbReference type="GO" id="GO:0004595">
    <property type="term" value="F:pantetheine-phosphate adenylyltransferase activity"/>
    <property type="evidence" value="ECO:0007669"/>
    <property type="project" value="UniProtKB-UniRule"/>
</dbReference>
<dbReference type="GO" id="GO:0015937">
    <property type="term" value="P:coenzyme A biosynthetic process"/>
    <property type="evidence" value="ECO:0007669"/>
    <property type="project" value="UniProtKB-UniRule"/>
</dbReference>
<dbReference type="CDD" id="cd02163">
    <property type="entry name" value="PPAT"/>
    <property type="match status" value="1"/>
</dbReference>
<dbReference type="Gene3D" id="3.40.50.620">
    <property type="entry name" value="HUPs"/>
    <property type="match status" value="1"/>
</dbReference>
<dbReference type="HAMAP" id="MF_00151">
    <property type="entry name" value="PPAT_bact"/>
    <property type="match status" value="1"/>
</dbReference>
<dbReference type="InterPro" id="IPR004821">
    <property type="entry name" value="Cyt_trans-like"/>
</dbReference>
<dbReference type="InterPro" id="IPR001980">
    <property type="entry name" value="PPAT"/>
</dbReference>
<dbReference type="InterPro" id="IPR014729">
    <property type="entry name" value="Rossmann-like_a/b/a_fold"/>
</dbReference>
<dbReference type="NCBIfam" id="TIGR01510">
    <property type="entry name" value="coaD_prev_kdtB"/>
    <property type="match status" value="1"/>
</dbReference>
<dbReference type="NCBIfam" id="TIGR00125">
    <property type="entry name" value="cyt_tran_rel"/>
    <property type="match status" value="1"/>
</dbReference>
<dbReference type="PANTHER" id="PTHR21342">
    <property type="entry name" value="PHOSPHOPANTETHEINE ADENYLYLTRANSFERASE"/>
    <property type="match status" value="1"/>
</dbReference>
<dbReference type="PANTHER" id="PTHR21342:SF1">
    <property type="entry name" value="PHOSPHOPANTETHEINE ADENYLYLTRANSFERASE"/>
    <property type="match status" value="1"/>
</dbReference>
<dbReference type="Pfam" id="PF01467">
    <property type="entry name" value="CTP_transf_like"/>
    <property type="match status" value="1"/>
</dbReference>
<dbReference type="PRINTS" id="PR01020">
    <property type="entry name" value="LPSBIOSNTHSS"/>
</dbReference>
<dbReference type="SUPFAM" id="SSF52374">
    <property type="entry name" value="Nucleotidylyl transferase"/>
    <property type="match status" value="1"/>
</dbReference>